<comment type="function">
    <text evidence="7 8">Inward rectifier potassium channels are characterized by a greater tendency to allow potassium to flow into the cell rather than out of it. Their voltage dependence is regulated by the concentration of extracellular potassium; as external potassium is raised, the voltage range of the channel opening shifts to more positive voltages. The inward rectification is mainly due to the blockage of outward current by internal magnesium. Can be blocked by extracellular barium and cesium.</text>
</comment>
<comment type="catalytic activity">
    <reaction evidence="7 8">
        <text>K(+)(in) = K(+)(out)</text>
        <dbReference type="Rhea" id="RHEA:29463"/>
        <dbReference type="ChEBI" id="CHEBI:29103"/>
    </reaction>
</comment>
<comment type="subunit">
    <text evidence="2 3 5 6">Homomultimeric and heteromultimeric association with KCNJ2 and KCNJ12 (By similarity). Interacts with DLG2 and DLG4 (PubMed:11997254). Associates, via its PDZ-recognition domain, with a complex containing LIN7A, LIN7B, LIN7C, DLG1, CASK and APBA1 (By similarity). Interacts with TAX1BP3. TAX1BP3 competes with LIN7 family members for KCNJ4 binding (PubMed:16855024).</text>
</comment>
<comment type="subcellular location">
    <subcellularLocation>
        <location evidence="5 6">Cell membrane</location>
        <topology evidence="4">Multi-pass membrane protein</topology>
    </subcellularLocation>
    <subcellularLocation>
        <location evidence="5">Postsynaptic cell membrane</location>
        <topology evidence="4">Multi-pass membrane protein</topology>
    </subcellularLocation>
    <subcellularLocation>
        <location evidence="6">Cytoplasmic vesicle membrane</location>
    </subcellularLocation>
    <text evidence="6">TAX1BP3 binding promotes dissociation of KCNJ4 from LIN7 family members and KCNJ4 internalization.</text>
</comment>
<comment type="tissue specificity">
    <text evidence="5">Highly expressed in the forebrain, moderately in skeletal muscle. Im olfactory bulb, specifically expressed at the postsynaptic membrane of dendritic spines of granule cells.</text>
</comment>
<comment type="developmental stage">
    <text evidence="7">Expression increases between day 2 to 45 and is then stable from day 45 to 120.</text>
</comment>
<comment type="similarity">
    <text evidence="9">Belongs to the inward rectifier-type potassium channel (TC 1.A.2.1) family. KCNJ4 subfamily.</text>
</comment>
<feature type="chain" id="PRO_0000154932" description="Inward rectifier potassium channel 4">
    <location>
        <begin position="1"/>
        <end position="445"/>
    </location>
</feature>
<feature type="topological domain" description="Cytoplasmic" evidence="1">
    <location>
        <begin position="1"/>
        <end position="55"/>
    </location>
</feature>
<feature type="transmembrane region" description="Helical; Name=M1" evidence="1">
    <location>
        <begin position="56"/>
        <end position="80"/>
    </location>
</feature>
<feature type="topological domain" description="Extracellular" evidence="1">
    <location>
        <begin position="81"/>
        <end position="119"/>
    </location>
</feature>
<feature type="intramembrane region" description="Helical; Pore-forming; Name=H5" evidence="1">
    <location>
        <begin position="120"/>
        <end position="131"/>
    </location>
</feature>
<feature type="intramembrane region" description="Pore-forming" evidence="1">
    <location>
        <begin position="132"/>
        <end position="138"/>
    </location>
</feature>
<feature type="topological domain" description="Extracellular" evidence="1">
    <location>
        <begin position="139"/>
        <end position="147"/>
    </location>
</feature>
<feature type="transmembrane region" description="Helical; Name=M2" evidence="1">
    <location>
        <begin position="148"/>
        <end position="169"/>
    </location>
</feature>
<feature type="topological domain" description="Cytoplasmic" evidence="1">
    <location>
        <begin position="170"/>
        <end position="445"/>
    </location>
</feature>
<feature type="short sequence motif" description="Selectivity filter" evidence="1">
    <location>
        <begin position="133"/>
        <end position="138"/>
    </location>
</feature>
<feature type="short sequence motif" description="PDZ-binding" evidence="4">
    <location>
        <begin position="443"/>
        <end position="445"/>
    </location>
</feature>
<feature type="site" description="Role in the control of polyamine-mediated channel gating and in the blocking by intracellular magnesium" evidence="1">
    <location>
        <position position="163"/>
    </location>
</feature>
<feature type="mutagenesis site" description="Abolishes interaction with TAX1BP3." evidence="6">
    <original>ESR</original>
    <variation>AAA</variation>
    <location>
        <begin position="442"/>
        <end position="444"/>
    </location>
</feature>
<feature type="mutagenesis site" description="Abolishes interaction with TAX1BP3." evidence="6">
    <original>E</original>
    <variation>A</variation>
    <location>
        <position position="442"/>
    </location>
</feature>
<feature type="mutagenesis site" description="Abolishes interaction with TAX1BP3." evidence="6">
    <original>S</original>
    <variation>A</variation>
    <variation>D</variation>
    <location>
        <position position="443"/>
    </location>
</feature>
<feature type="mutagenesis site" description="Abolishes interaction with TAX1BP3." evidence="6">
    <original>I</original>
    <variation>A</variation>
    <location>
        <position position="445"/>
    </location>
</feature>
<feature type="sequence conflict" description="In Ref. 2; AAA53241." evidence="9" ref="2">
    <original>W</original>
    <variation>C</variation>
    <location>
        <position position="79"/>
    </location>
</feature>
<feature type="sequence conflict" description="In Ref. 2; AAA53241." evidence="9" ref="2">
    <original>D</original>
    <variation>E</variation>
    <location>
        <position position="86"/>
    </location>
</feature>
<feature type="sequence conflict" description="In Ref. 2; AAA53241." evidence="9" ref="2">
    <original>V</original>
    <variation>A</variation>
    <location>
        <position position="96"/>
    </location>
</feature>
<feature type="sequence conflict" description="In Ref. 2; AAA53241." evidence="9" ref="2">
    <original>E</original>
    <variation>A</variation>
    <location>
        <position position="105"/>
    </location>
</feature>
<feature type="sequence conflict" description="In Ref. 2; AAA53241." evidence="9" ref="2">
    <original>R</original>
    <variation>G</variation>
    <location>
        <position position="239"/>
    </location>
</feature>
<feature type="sequence conflict" description="In Ref. 2; AAA53241." evidence="9" ref="2">
    <original>R</original>
    <variation>A</variation>
    <location>
        <position position="444"/>
    </location>
</feature>
<gene>
    <name type="primary">Kcnj4</name>
    <name type="synonym">Irk3</name>
</gene>
<accession>P52189</accession>
<protein>
    <recommendedName>
        <fullName>Inward rectifier potassium channel 4</fullName>
    </recommendedName>
    <alternativeName>
        <fullName>Inward rectifier K(+) channel Kir2.3</fullName>
        <shortName>IRK-3</shortName>
    </alternativeName>
    <alternativeName>
        <fullName>Potassium channel, inwardly rectifying subfamily J member 4</fullName>
    </alternativeName>
</protein>
<keyword id="KW-1003">Cell membrane</keyword>
<keyword id="KW-0968">Cytoplasmic vesicle</keyword>
<keyword id="KW-0407">Ion channel</keyword>
<keyword id="KW-0406">Ion transport</keyword>
<keyword id="KW-0472">Membrane</keyword>
<keyword id="KW-0628">Postsynaptic cell membrane</keyword>
<keyword id="KW-0630">Potassium</keyword>
<keyword id="KW-0633">Potassium transport</keyword>
<keyword id="KW-1185">Reference proteome</keyword>
<keyword id="KW-0770">Synapse</keyword>
<keyword id="KW-0812">Transmembrane</keyword>
<keyword id="KW-1133">Transmembrane helix</keyword>
<keyword id="KW-0813">Transport</keyword>
<keyword id="KW-0851">Voltage-gated channel</keyword>
<organism>
    <name type="scientific">Mus musculus</name>
    <name type="common">Mouse</name>
    <dbReference type="NCBI Taxonomy" id="10090"/>
    <lineage>
        <taxon>Eukaryota</taxon>
        <taxon>Metazoa</taxon>
        <taxon>Chordata</taxon>
        <taxon>Craniata</taxon>
        <taxon>Vertebrata</taxon>
        <taxon>Euteleostomi</taxon>
        <taxon>Mammalia</taxon>
        <taxon>Eutheria</taxon>
        <taxon>Euarchontoglires</taxon>
        <taxon>Glires</taxon>
        <taxon>Rodentia</taxon>
        <taxon>Myomorpha</taxon>
        <taxon>Muroidea</taxon>
        <taxon>Muridae</taxon>
        <taxon>Murinae</taxon>
        <taxon>Mus</taxon>
        <taxon>Mus</taxon>
    </lineage>
</organism>
<sequence length="445" mass="49899">MHGHNRNGQAHVPRRKRRNRFVKKNGQCNVYFANLSNKSQRYMADIFTTCVDTRWRYMLMIFSAAFLVSWLFFGLLFWWIAFFHGDLEASPSVPAVGGPGGNGGESPNAPKPCIMHVNGFLGAFLFSVETQTTIGYGFRCVTEECPLAVIAVVVQSIVGCVIDSFMIGTIMAKMARPKKRAQTLLFSHHAVISVRDGKLCLMWRVGNLRKSHIVEAHVRAQLIKPYMTQEGEYLPLDQRDLNVGYDIGLDRIFLVSPIIIVHEIDEDSPLYGMGKEELESEDFEIVVILEGMVEATAMTTQARSSYLASEILWGHRFEPVVFEEKSHYKVDYSRFHKTYEVAGTPCCSARELQESKITVLPAPPPPPSAFCYENELALMSQEEEEMEEEAAAAAAVAAGLGLEAGSKEEAGIIRMLEFGSHLDLERMQAATLPLDNISYRRESRI</sequence>
<reference key="1">
    <citation type="journal article" date="1994" name="FEBS Lett.">
        <title>Molecular cloning and functional expression of a novel brain-specific inward rectifier potassium channel.</title>
        <authorList>
            <person name="Morishige K."/>
            <person name="Takahashi N."/>
            <person name="Jahangir A."/>
            <person name="Yamada M."/>
            <person name="Koyama H."/>
            <person name="Zanelli J.S."/>
            <person name="Kurachi Y."/>
        </authorList>
    </citation>
    <scope>NUCLEOTIDE SEQUENCE [MRNA]</scope>
    <scope>FUNCTION</scope>
    <scope>TRANSPORTER ACTIVITY</scope>
    <source>
        <tissue>Brain</tissue>
    </source>
</reference>
<reference key="2">
    <citation type="journal article" date="1994" name="FEBS Lett.">
        <title>Cloning provides evidence for a family of inward rectifier and G-protein coupled K+ channels in the brain.</title>
        <authorList>
            <person name="Lesage F."/>
            <person name="Duprat F."/>
            <person name="Fink M."/>
            <person name="Guillemare E."/>
            <person name="Coppola T."/>
            <person name="Lazdunski M."/>
            <person name="Hugnot J.-P."/>
        </authorList>
    </citation>
    <scope>NUCLEOTIDE SEQUENCE [MRNA]</scope>
    <scope>FUNCTION</scope>
    <scope>TRANSPORTER ACTIVITY</scope>
    <scope>DEVELOPMENTAL STAGE</scope>
    <source>
        <tissue>Brain</tissue>
    </source>
</reference>
<reference key="3">
    <citation type="journal article" date="2002" name="Am. J. Physiol.">
        <title>Inward rectifier K+ channel Kir2.3 is localized at the postsynaptic membrane of excitatory synapses.</title>
        <authorList>
            <person name="Inanobe A."/>
            <person name="Fujita A."/>
            <person name="Ito M."/>
            <person name="Tomoike H."/>
            <person name="Inageda K."/>
            <person name="Kurachi Y."/>
        </authorList>
    </citation>
    <scope>SUBCELLULAR LOCATION</scope>
    <scope>TISSUE SPECIFICITY</scope>
    <scope>INTERACTION WITH DLG2 AND DLG4</scope>
</reference>
<reference key="4">
    <citation type="journal article" date="2006" name="Mol. Biol. Cell">
        <title>TIP-1 has PDZ scaffold antagonist activity.</title>
        <authorList>
            <person name="Alewine C."/>
            <person name="Olsen O."/>
            <person name="Wade J.B."/>
            <person name="Welling P.A."/>
        </authorList>
    </citation>
    <scope>INTERACTION WITH TAX1BP3 AND LIN7A</scope>
    <scope>SUBCELLULAR LOCATION</scope>
    <scope>MUTAGENESIS OF 442-GLU--ARG-444; GLU-442; SER-443 AND ILE-445</scope>
</reference>
<proteinExistence type="evidence at protein level"/>
<evidence type="ECO:0000250" key="1"/>
<evidence type="ECO:0000250" key="2">
    <source>
        <dbReference type="UniProtKB" id="P48050"/>
    </source>
</evidence>
<evidence type="ECO:0000250" key="3">
    <source>
        <dbReference type="UniProtKB" id="P52190"/>
    </source>
</evidence>
<evidence type="ECO:0000255" key="4"/>
<evidence type="ECO:0000269" key="5">
    <source>
    </source>
</evidence>
<evidence type="ECO:0000269" key="6">
    <source>
    </source>
</evidence>
<evidence type="ECO:0000269" key="7">
    <source>
    </source>
</evidence>
<evidence type="ECO:0000269" key="8">
    <source>
    </source>
</evidence>
<evidence type="ECO:0000305" key="9"/>
<name>KCNJ4_MOUSE</name>
<dbReference type="EMBL" id="U11075">
    <property type="protein sequence ID" value="AAA53241.1"/>
    <property type="molecule type" value="mRNA"/>
</dbReference>
<dbReference type="EMBL" id="S71382">
    <property type="protein sequence ID" value="AAB31087.1"/>
    <property type="molecule type" value="mRNA"/>
</dbReference>
<dbReference type="CCDS" id="CCDS27641.1"/>
<dbReference type="PIR" id="S45713">
    <property type="entry name" value="S45713"/>
</dbReference>
<dbReference type="SMR" id="P52189"/>
<dbReference type="FunCoup" id="P52189">
    <property type="interactions" value="41"/>
</dbReference>
<dbReference type="IntAct" id="P52189">
    <property type="interactions" value="4"/>
</dbReference>
<dbReference type="MINT" id="P52189"/>
<dbReference type="STRING" id="10090.ENSMUSP00000094075"/>
<dbReference type="GuidetoPHARMACOLOGY" id="432"/>
<dbReference type="GlyGen" id="P52189">
    <property type="glycosylation" value="3 sites, 2 N-linked glycans (2 sites), 1 O-linked glycan (1 site)"/>
</dbReference>
<dbReference type="iPTMnet" id="P52189"/>
<dbReference type="PhosphoSitePlus" id="P52189"/>
<dbReference type="SwissPalm" id="P52189"/>
<dbReference type="jPOST" id="P52189"/>
<dbReference type="PaxDb" id="10090-ENSMUSP00000094075"/>
<dbReference type="PeptideAtlas" id="P52189"/>
<dbReference type="ProteomicsDB" id="263402"/>
<dbReference type="AGR" id="MGI:104743"/>
<dbReference type="MGI" id="MGI:104743">
    <property type="gene designation" value="Kcnj4"/>
</dbReference>
<dbReference type="eggNOG" id="KOG3827">
    <property type="taxonomic scope" value="Eukaryota"/>
</dbReference>
<dbReference type="InParanoid" id="P52189"/>
<dbReference type="PhylomeDB" id="P52189"/>
<dbReference type="Reactome" id="R-MMU-1296041">
    <property type="pathway name" value="Activation of G protein gated Potassium channels"/>
</dbReference>
<dbReference type="Reactome" id="R-MMU-1296053">
    <property type="pathway name" value="Classical Kir channels"/>
</dbReference>
<dbReference type="Reactome" id="R-MMU-5576886">
    <property type="pathway name" value="Phase 4 - resting membrane potential"/>
</dbReference>
<dbReference type="Reactome" id="R-MMU-997272">
    <property type="pathway name" value="Inhibition of voltage gated Ca2+ channels via Gbeta/gamma subunits"/>
</dbReference>
<dbReference type="PRO" id="PR:P52189"/>
<dbReference type="Proteomes" id="UP000000589">
    <property type="component" value="Unplaced"/>
</dbReference>
<dbReference type="RNAct" id="P52189">
    <property type="molecule type" value="protein"/>
</dbReference>
<dbReference type="GO" id="GO:0030659">
    <property type="term" value="C:cytoplasmic vesicle membrane"/>
    <property type="evidence" value="ECO:0007669"/>
    <property type="project" value="UniProtKB-SubCell"/>
</dbReference>
<dbReference type="GO" id="GO:0098978">
    <property type="term" value="C:glutamatergic synapse"/>
    <property type="evidence" value="ECO:0000314"/>
    <property type="project" value="SynGO"/>
</dbReference>
<dbReference type="GO" id="GO:0034702">
    <property type="term" value="C:monoatomic ion channel complex"/>
    <property type="evidence" value="ECO:0007669"/>
    <property type="project" value="UniProtKB-KW"/>
</dbReference>
<dbReference type="GO" id="GO:0045211">
    <property type="term" value="C:postsynaptic membrane"/>
    <property type="evidence" value="ECO:0000314"/>
    <property type="project" value="SynGO"/>
</dbReference>
<dbReference type="GO" id="GO:0005242">
    <property type="term" value="F:inward rectifier potassium channel activity"/>
    <property type="evidence" value="ECO:0000314"/>
    <property type="project" value="UniProtKB"/>
</dbReference>
<dbReference type="FunFam" id="1.10.287.70:FF:000039">
    <property type="entry name" value="ATP-sensitive inward rectifier potassium channel 12"/>
    <property type="match status" value="1"/>
</dbReference>
<dbReference type="FunFam" id="2.60.40.1400:FF:000001">
    <property type="entry name" value="G protein-activated inward rectifier potassium channel 2"/>
    <property type="match status" value="1"/>
</dbReference>
<dbReference type="Gene3D" id="1.10.287.70">
    <property type="match status" value="1"/>
</dbReference>
<dbReference type="Gene3D" id="2.60.40.1400">
    <property type="entry name" value="G protein-activated inward rectifier potassium channel 1"/>
    <property type="match status" value="1"/>
</dbReference>
<dbReference type="InterPro" id="IPR014756">
    <property type="entry name" value="Ig_E-set"/>
</dbReference>
<dbReference type="InterPro" id="IPR041647">
    <property type="entry name" value="IRK_C"/>
</dbReference>
<dbReference type="InterPro" id="IPR016449">
    <property type="entry name" value="K_chnl_inward-rec_Kir"/>
</dbReference>
<dbReference type="InterPro" id="IPR003273">
    <property type="entry name" value="K_chnl_inward-rec_Kir2.3"/>
</dbReference>
<dbReference type="InterPro" id="IPR013518">
    <property type="entry name" value="K_chnl_inward-rec_Kir_cyto"/>
</dbReference>
<dbReference type="InterPro" id="IPR040445">
    <property type="entry name" value="Kir_TM"/>
</dbReference>
<dbReference type="PANTHER" id="PTHR11767">
    <property type="entry name" value="INWARD RECTIFIER POTASSIUM CHANNEL"/>
    <property type="match status" value="1"/>
</dbReference>
<dbReference type="PANTHER" id="PTHR11767:SF53">
    <property type="entry name" value="INWARD RECTIFIER POTASSIUM CHANNEL 4"/>
    <property type="match status" value="1"/>
</dbReference>
<dbReference type="Pfam" id="PF01007">
    <property type="entry name" value="IRK"/>
    <property type="match status" value="1"/>
</dbReference>
<dbReference type="Pfam" id="PF17655">
    <property type="entry name" value="IRK_C"/>
    <property type="match status" value="1"/>
</dbReference>
<dbReference type="PIRSF" id="PIRSF005465">
    <property type="entry name" value="GIRK_kir"/>
    <property type="match status" value="1"/>
</dbReference>
<dbReference type="PRINTS" id="PR01326">
    <property type="entry name" value="KIR23CHANNEL"/>
</dbReference>
<dbReference type="PRINTS" id="PR01320">
    <property type="entry name" value="KIRCHANNEL"/>
</dbReference>
<dbReference type="SUPFAM" id="SSF81296">
    <property type="entry name" value="E set domains"/>
    <property type="match status" value="1"/>
</dbReference>
<dbReference type="SUPFAM" id="SSF81324">
    <property type="entry name" value="Voltage-gated potassium channels"/>
    <property type="match status" value="1"/>
</dbReference>